<proteinExistence type="inferred from homology"/>
<accession>B7I936</accession>
<protein>
    <recommendedName>
        <fullName evidence="1">Ribose-5-phosphate isomerase A</fullName>
        <ecNumber evidence="1">5.3.1.6</ecNumber>
    </recommendedName>
    <alternativeName>
        <fullName evidence="1">Phosphoriboisomerase A</fullName>
        <shortName evidence="1">PRI</shortName>
    </alternativeName>
</protein>
<sequence>MSLYATQDEKKQAAAKAALKHLPKGGILGVGTGSTVNFLIDLLPELQLEAAVASSQATADRLKKLGIEVVDMNHVGSLDAYVDGADEIDRHMHMIKGGGAALTREKIVASIAKKFVCIVDDSKWVDQLGRDFPLPVEVIPMARSAVARKLVSLGGDPVYREGVVTDNGNVILDVFNLNILNAIDLEKTINNIPGVVTNGIFALNPATIAIVATNDGIEERTAQ</sequence>
<reference key="1">
    <citation type="journal article" date="2008" name="J. Bacteriol.">
        <title>Comparative genome sequence analysis of multidrug-resistant Acinetobacter baumannii.</title>
        <authorList>
            <person name="Adams M.D."/>
            <person name="Goglin K."/>
            <person name="Molyneaux N."/>
            <person name="Hujer K.M."/>
            <person name="Lavender H."/>
            <person name="Jamison J.J."/>
            <person name="MacDonald I.J."/>
            <person name="Martin K.M."/>
            <person name="Russo T."/>
            <person name="Campagnari A.A."/>
            <person name="Hujer A.M."/>
            <person name="Bonomo R.A."/>
            <person name="Gill S.R."/>
        </authorList>
    </citation>
    <scope>NUCLEOTIDE SEQUENCE [LARGE SCALE GENOMIC DNA]</scope>
    <source>
        <strain>AB0057</strain>
    </source>
</reference>
<name>RPIA_ACIB5</name>
<dbReference type="EC" id="5.3.1.6" evidence="1"/>
<dbReference type="EMBL" id="CP001182">
    <property type="protein sequence ID" value="ACJ41621.1"/>
    <property type="molecule type" value="Genomic_DNA"/>
</dbReference>
<dbReference type="RefSeq" id="WP_000061059.1">
    <property type="nucleotide sequence ID" value="NC_011586.2"/>
</dbReference>
<dbReference type="SMR" id="B7I936"/>
<dbReference type="KEGG" id="abn:AB57_2251"/>
<dbReference type="HOGENOM" id="CLU_056590_1_1_6"/>
<dbReference type="UniPathway" id="UPA00115">
    <property type="reaction ID" value="UER00412"/>
</dbReference>
<dbReference type="Proteomes" id="UP000007094">
    <property type="component" value="Chromosome"/>
</dbReference>
<dbReference type="GO" id="GO:0005829">
    <property type="term" value="C:cytosol"/>
    <property type="evidence" value="ECO:0007669"/>
    <property type="project" value="TreeGrafter"/>
</dbReference>
<dbReference type="GO" id="GO:0004751">
    <property type="term" value="F:ribose-5-phosphate isomerase activity"/>
    <property type="evidence" value="ECO:0007669"/>
    <property type="project" value="UniProtKB-UniRule"/>
</dbReference>
<dbReference type="GO" id="GO:0006014">
    <property type="term" value="P:D-ribose metabolic process"/>
    <property type="evidence" value="ECO:0007669"/>
    <property type="project" value="TreeGrafter"/>
</dbReference>
<dbReference type="GO" id="GO:0009052">
    <property type="term" value="P:pentose-phosphate shunt, non-oxidative branch"/>
    <property type="evidence" value="ECO:0007669"/>
    <property type="project" value="UniProtKB-UniRule"/>
</dbReference>
<dbReference type="CDD" id="cd01398">
    <property type="entry name" value="RPI_A"/>
    <property type="match status" value="1"/>
</dbReference>
<dbReference type="FunFam" id="3.30.70.260:FF:000004">
    <property type="entry name" value="Ribose-5-phosphate isomerase A"/>
    <property type="match status" value="1"/>
</dbReference>
<dbReference type="FunFam" id="3.40.50.1360:FF:000001">
    <property type="entry name" value="Ribose-5-phosphate isomerase A"/>
    <property type="match status" value="1"/>
</dbReference>
<dbReference type="Gene3D" id="3.30.70.260">
    <property type="match status" value="1"/>
</dbReference>
<dbReference type="Gene3D" id="3.40.50.1360">
    <property type="match status" value="1"/>
</dbReference>
<dbReference type="HAMAP" id="MF_00170">
    <property type="entry name" value="Rib_5P_isom_A"/>
    <property type="match status" value="1"/>
</dbReference>
<dbReference type="InterPro" id="IPR037171">
    <property type="entry name" value="NagB/RpiA_transferase-like"/>
</dbReference>
<dbReference type="InterPro" id="IPR020672">
    <property type="entry name" value="Ribose5P_isomerase_typA_subgr"/>
</dbReference>
<dbReference type="InterPro" id="IPR004788">
    <property type="entry name" value="Ribose5P_isomerase_type_A"/>
</dbReference>
<dbReference type="NCBIfam" id="NF001924">
    <property type="entry name" value="PRK00702.1"/>
    <property type="match status" value="1"/>
</dbReference>
<dbReference type="NCBIfam" id="TIGR00021">
    <property type="entry name" value="rpiA"/>
    <property type="match status" value="1"/>
</dbReference>
<dbReference type="PANTHER" id="PTHR11934">
    <property type="entry name" value="RIBOSE-5-PHOSPHATE ISOMERASE"/>
    <property type="match status" value="1"/>
</dbReference>
<dbReference type="PANTHER" id="PTHR11934:SF0">
    <property type="entry name" value="RIBOSE-5-PHOSPHATE ISOMERASE"/>
    <property type="match status" value="1"/>
</dbReference>
<dbReference type="Pfam" id="PF06026">
    <property type="entry name" value="Rib_5-P_isom_A"/>
    <property type="match status" value="1"/>
</dbReference>
<dbReference type="SUPFAM" id="SSF75445">
    <property type="entry name" value="D-ribose-5-phosphate isomerase (RpiA), lid domain"/>
    <property type="match status" value="1"/>
</dbReference>
<dbReference type="SUPFAM" id="SSF100950">
    <property type="entry name" value="NagB/RpiA/CoA transferase-like"/>
    <property type="match status" value="1"/>
</dbReference>
<comment type="function">
    <text evidence="1">Catalyzes the reversible conversion of ribose-5-phosphate to ribulose 5-phosphate.</text>
</comment>
<comment type="catalytic activity">
    <reaction evidence="1">
        <text>aldehydo-D-ribose 5-phosphate = D-ribulose 5-phosphate</text>
        <dbReference type="Rhea" id="RHEA:14657"/>
        <dbReference type="ChEBI" id="CHEBI:58121"/>
        <dbReference type="ChEBI" id="CHEBI:58273"/>
        <dbReference type="EC" id="5.3.1.6"/>
    </reaction>
</comment>
<comment type="pathway">
    <text evidence="1">Carbohydrate degradation; pentose phosphate pathway; D-ribose 5-phosphate from D-ribulose 5-phosphate (non-oxidative stage): step 1/1.</text>
</comment>
<comment type="subunit">
    <text evidence="1">Homodimer.</text>
</comment>
<comment type="similarity">
    <text evidence="1">Belongs to the ribose 5-phosphate isomerase family.</text>
</comment>
<organism>
    <name type="scientific">Acinetobacter baumannii (strain AB0057)</name>
    <dbReference type="NCBI Taxonomy" id="480119"/>
    <lineage>
        <taxon>Bacteria</taxon>
        <taxon>Pseudomonadati</taxon>
        <taxon>Pseudomonadota</taxon>
        <taxon>Gammaproteobacteria</taxon>
        <taxon>Moraxellales</taxon>
        <taxon>Moraxellaceae</taxon>
        <taxon>Acinetobacter</taxon>
        <taxon>Acinetobacter calcoaceticus/baumannii complex</taxon>
    </lineage>
</organism>
<evidence type="ECO:0000255" key="1">
    <source>
        <dbReference type="HAMAP-Rule" id="MF_00170"/>
    </source>
</evidence>
<feature type="chain" id="PRO_1000194686" description="Ribose-5-phosphate isomerase A">
    <location>
        <begin position="1"/>
        <end position="223"/>
    </location>
</feature>
<feature type="active site" description="Proton acceptor" evidence="1">
    <location>
        <position position="105"/>
    </location>
</feature>
<feature type="binding site" evidence="1">
    <location>
        <begin position="32"/>
        <end position="35"/>
    </location>
    <ligand>
        <name>substrate</name>
    </ligand>
</feature>
<feature type="binding site" evidence="1">
    <location>
        <begin position="83"/>
        <end position="86"/>
    </location>
    <ligand>
        <name>substrate</name>
    </ligand>
</feature>
<feature type="binding site" evidence="1">
    <location>
        <begin position="96"/>
        <end position="99"/>
    </location>
    <ligand>
        <name>substrate</name>
    </ligand>
</feature>
<feature type="binding site" evidence="1">
    <location>
        <position position="123"/>
    </location>
    <ligand>
        <name>substrate</name>
    </ligand>
</feature>
<keyword id="KW-0413">Isomerase</keyword>
<gene>
    <name evidence="1" type="primary">rpiA</name>
    <name type="ordered locus">AB57_2251</name>
</gene>